<keyword id="KW-0025">Alternative splicing</keyword>
<keyword id="KW-0217">Developmental protein</keyword>
<keyword id="KW-0539">Nucleus</keyword>
<keyword id="KW-1185">Reference proteome</keyword>
<keyword id="KW-0678">Repressor</keyword>
<keyword id="KW-0804">Transcription</keyword>
<keyword id="KW-0805">Transcription regulation</keyword>
<comment type="function">
    <text evidence="2 3 4 7">Synthetic multivulva class B (synMuvB) protein (PubMed:16678779, PubMed:17075059). SynMuvB proteins are required to repress the induction of vulval development by Ras signaling and probably act by forming the multiprotein DRM complex that represses transcription (PubMed:17075059). Required for the development of sheath cells in the hermaphrodite gonad and for the development of the male spicule, rays and gonad (PubMed:10974557). In association with the zinc finger protein ztf-11, negatively regulates the expression of non-neuronal genes during neurogenesis (PubMed:31386623).</text>
</comment>
<comment type="subunit">
    <text evidence="4 7">Component of the DRM complex, at least composed of lin-9, lin-35, lin-37, lin-52, lin-53, lin-54- dpl-1 and efl-1 (PubMed:17075059). Interacts with zft-11; the interaction is required to suppress the activation of non-neuronal genes in neurons (PubMed:31386623).</text>
</comment>
<comment type="subcellular location">
    <subcellularLocation>
        <location evidence="9">Nucleus</location>
    </subcellularLocation>
</comment>
<comment type="alternative products">
    <event type="alternative splicing"/>
    <isoform>
        <id>P30630-1</id>
        <name>b</name>
        <name>LIN-9L</name>
        <sequence type="displayed"/>
    </isoform>
    <isoform>
        <id>P30630-2</id>
        <name>a</name>
        <name>LIN-9S</name>
        <sequence type="described" ref="VSP_007013"/>
    </isoform>
</comment>
<comment type="disruption phenotype">
    <text evidence="4 5 6">Decreased protein levels of DRM complex components including lin-37, lin-52 and lin-54 (PubMed:17075059). Double knockout with the programmed cell death regulator mcd-1 results in 100% lethality during the L1 stage of larval development (PubMed:17237514). RNAi-mediated knockdown in a ced-1 mutant background results in reduced somatic cell apoptosis (PubMed:27650246).</text>
</comment>
<comment type="similarity">
    <text evidence="9">Belongs to the lin-9 family.</text>
</comment>
<sequence>MSSAVRSPRKKAASDTSDPDRTSSPYSLRETSKVPSRYRNEELYLSPSRSIKRTGSPKKSPAKRLNGGRDSPSVNSLTRNSSLTMLAKAALDYESSSCALEYIFQPKEERRPPRRALALSPPPAPSNDLLAKDLEMIEMHQNLVAGLDDLDNPANMTNEAVEHRDTQSFFNMFSTDQERSAMMKQFKTYKNQTSEDVSTFMRANIKKLYNLLRYKKARQWVMCEFFYSAIDEQIFKEENEFATIIRESFPNLKNWNLTRIEWRSIRKLLGKPRRCSKVFFEEERMYLEEKRMKIRSVYEGSYLNDPSIDLKDLPAKLPRPMVVGNRVFARIRNPYDGIYSGIIDAVIPKGFRIIFDKPDIPPTLVSDTEILLDGKLDLLSIAYFIEQANSKLPSGVRPFVAAVRDSSHPHLVRDVLVSRKIERSGGPLMGPNDERLNGKNAEMVGNFPLKFLVNLVKLTKLIDIKKGLIRQLNELNADAEIQNMTSDKYSKAFQEKYAKTIIDLEHVNQNIDINMNGIQDHHMYFSSNDISTSNMKPEAVRQMCSQQAGRFVEHCNQGLNVENVHALTLIQSLTAVLLQVRTMGTQKISAVDLQSLGDAISEIRTAIHPRNVAFFQDYVEVHMKQFHTIMLESGALAGTVSNRK</sequence>
<reference key="1">
    <citation type="journal article" date="2000" name="Gene">
        <title>The C. elegans gene lin-9, which acts in an Rb-related pathway, is required for gonadal sheath cell development and encodes a novel protein.</title>
        <authorList>
            <person name="Beitel G.J."/>
            <person name="Lambie E.J."/>
            <person name="Horvitz H.R."/>
        </authorList>
    </citation>
    <scope>NUCLEOTIDE SEQUENCE [MRNA] (ISOFORMS A AND B)</scope>
    <scope>FUNCTION</scope>
    <scope>MUTAGENESIS OF GLY-341</scope>
    <source>
        <strain>Bristol N2</strain>
    </source>
</reference>
<reference key="2">
    <citation type="journal article" date="1992" name="Nature">
        <title>The C. elegans genome sequencing project: a beginning.</title>
        <authorList>
            <person name="Sulston J."/>
            <person name="Du Z."/>
            <person name="Thomas K."/>
            <person name="Wilson R."/>
            <person name="Hillier L."/>
            <person name="Staden R."/>
            <person name="Halloran N."/>
            <person name="Green P."/>
            <person name="Thierry-Mieg J."/>
            <person name="Qiu L."/>
            <person name="Dear S."/>
            <person name="Coulson A."/>
            <person name="Craxton M."/>
            <person name="Durbin R."/>
            <person name="Berks M."/>
            <person name="Metzstein M."/>
            <person name="Hawkins T."/>
            <person name="Ainscough R."/>
            <person name="Waterston R."/>
        </authorList>
    </citation>
    <scope>NUCLEOTIDE SEQUENCE [LARGE SCALE GENOMIC DNA]</scope>
    <source>
        <strain>Bristol N2</strain>
    </source>
</reference>
<reference key="3">
    <citation type="journal article" date="1998" name="Science">
        <title>Genome sequence of the nematode C. elegans: a platform for investigating biology.</title>
        <authorList>
            <consortium name="The C. elegans sequencing consortium"/>
        </authorList>
    </citation>
    <scope>NUCLEOTIDE SEQUENCE [LARGE SCALE GENOMIC DNA]</scope>
    <source>
        <strain>Bristol N2</strain>
    </source>
</reference>
<reference key="4">
    <citation type="journal article" date="2006" name="Dev. Cell">
        <title>SynMuv genes redundantly inhibit lin-3/EGF expression to prevent inappropriate vulval induction in C. elegans.</title>
        <authorList>
            <person name="Cui M."/>
            <person name="Chen J."/>
            <person name="Myers T.R."/>
            <person name="Hwang B.J."/>
            <person name="Sternberg P.W."/>
            <person name="Greenwald I."/>
            <person name="Han M."/>
        </authorList>
    </citation>
    <scope>FUNCTION</scope>
    <scope>MUTAGENESIS OF GLY-341</scope>
</reference>
<reference key="5">
    <citation type="journal article" date="2006" name="Proc. Natl. Acad. Sci. U.S.A.">
        <title>Some C. elegans class B synthetic multivulva proteins encode a conserved LIN-35 Rb-containing complex distinct from a NuRD-like complex.</title>
        <authorList>
            <person name="Harrison M.M."/>
            <person name="Ceol C.J."/>
            <person name="Lu X."/>
            <person name="Horvitz H.R."/>
        </authorList>
    </citation>
    <scope>FUNCTION</scope>
    <scope>IDENTIFICATION IN THE DRM COMPLEX</scope>
    <scope>DISRUPTION PHENOTYPE</scope>
</reference>
<reference key="6">
    <citation type="journal article" date="2007" name="Genetics">
        <title>DPL-1 DP, LIN-35 Rb and EFL-1 E2F act with the MCD-1 zinc-finger protein to promote programmed cell death in Caenorhabditis elegans.</title>
        <authorList>
            <person name="Reddien P.W."/>
            <person name="Andersen E.C."/>
            <person name="Huang M.C."/>
            <person name="Horvitz H.R."/>
        </authorList>
    </citation>
    <scope>DISRUPTION PHENOTYPE</scope>
</reference>
<reference key="7">
    <citation type="journal article" date="2016" name="Sci. Rep.">
        <title>Somatically expressed germ-granule components, PGL-1 and PGL-3, repress programmed cell death in C. elegans.</title>
        <authorList>
            <person name="Al-Amin M."/>
            <person name="Min H."/>
            <person name="Shim Y.H."/>
            <person name="Kawasaki I."/>
        </authorList>
    </citation>
    <scope>DISRUPTION PHENOTYPE</scope>
</reference>
<reference key="8">
    <citation type="journal article" date="2019" name="Elife">
        <title>A Myt1 family transcription factor defines neuronal fate by repressing non-neuronal genes.</title>
        <authorList>
            <person name="Lee J."/>
            <person name="Taylor C.A."/>
            <person name="Barnes K.M."/>
            <person name="Shen A."/>
            <person name="Stewart E.V."/>
            <person name="Chen A."/>
            <person name="Xiang Y.K."/>
            <person name="Bao Z."/>
            <person name="Shen K."/>
        </authorList>
    </citation>
    <scope>FUNCTION</scope>
    <scope>INTERACTION WITH ZTF-11</scope>
</reference>
<evidence type="ECO:0000256" key="1">
    <source>
        <dbReference type="SAM" id="MobiDB-lite"/>
    </source>
</evidence>
<evidence type="ECO:0000269" key="2">
    <source>
    </source>
</evidence>
<evidence type="ECO:0000269" key="3">
    <source>
    </source>
</evidence>
<evidence type="ECO:0000269" key="4">
    <source>
    </source>
</evidence>
<evidence type="ECO:0000269" key="5">
    <source>
    </source>
</evidence>
<evidence type="ECO:0000269" key="6">
    <source>
    </source>
</evidence>
<evidence type="ECO:0000269" key="7">
    <source>
    </source>
</evidence>
<evidence type="ECO:0000303" key="8">
    <source>
    </source>
</evidence>
<evidence type="ECO:0000305" key="9"/>
<evidence type="ECO:0000312" key="10">
    <source>
        <dbReference type="WormBase" id="ZK637.7b"/>
    </source>
</evidence>
<accession>P30630</accession>
<accession>Q9NB37</accession>
<accession>Q9NB38</accession>
<dbReference type="EMBL" id="AF269693">
    <property type="protein sequence ID" value="AAF76192.1"/>
    <property type="molecule type" value="mRNA"/>
</dbReference>
<dbReference type="EMBL" id="AF269694">
    <property type="protein sequence ID" value="AAF76193.1"/>
    <property type="molecule type" value="mRNA"/>
</dbReference>
<dbReference type="EMBL" id="BX284603">
    <property type="protein sequence ID" value="CAA77454.2"/>
    <property type="molecule type" value="Genomic_DNA"/>
</dbReference>
<dbReference type="EMBL" id="BX284603">
    <property type="protein sequence ID" value="CAC42391.1"/>
    <property type="molecule type" value="Genomic_DNA"/>
</dbReference>
<dbReference type="PIR" id="A88542">
    <property type="entry name" value="A88542"/>
</dbReference>
<dbReference type="PIR" id="S15794">
    <property type="entry name" value="S15794"/>
</dbReference>
<dbReference type="RefSeq" id="NP_001023015.1">
    <molecule id="P30630-2"/>
    <property type="nucleotide sequence ID" value="NM_001027844.5"/>
</dbReference>
<dbReference type="RefSeq" id="NP_001023016.1">
    <molecule id="P30630-1"/>
    <property type="nucleotide sequence ID" value="NM_001027845.6"/>
</dbReference>
<dbReference type="SMR" id="P30630"/>
<dbReference type="BioGRID" id="41457">
    <property type="interactions" value="7"/>
</dbReference>
<dbReference type="ComplexPortal" id="CPX-1100">
    <property type="entry name" value="DRM complex"/>
</dbReference>
<dbReference type="DIP" id="DIP-61304N"/>
<dbReference type="FunCoup" id="P30630">
    <property type="interactions" value="1998"/>
</dbReference>
<dbReference type="IntAct" id="P30630">
    <property type="interactions" value="5"/>
</dbReference>
<dbReference type="STRING" id="6239.ZK637.7b.1"/>
<dbReference type="iPTMnet" id="P30630"/>
<dbReference type="PaxDb" id="6239-ZK637.7b"/>
<dbReference type="PeptideAtlas" id="P30630"/>
<dbReference type="EnsemblMetazoa" id="ZK637.7a.1">
    <molecule id="P30630-2"/>
    <property type="protein sequence ID" value="ZK637.7a.1"/>
    <property type="gene ID" value="WBGene00002998"/>
</dbReference>
<dbReference type="EnsemblMetazoa" id="ZK637.7b.1">
    <molecule id="P30630-1"/>
    <property type="protein sequence ID" value="ZK637.7b.1"/>
    <property type="gene ID" value="WBGene00002998"/>
</dbReference>
<dbReference type="GeneID" id="176256"/>
<dbReference type="KEGG" id="cel:CELE_ZK637.7"/>
<dbReference type="UCSC" id="ZK637.7b.2">
    <molecule id="P30630-1"/>
    <property type="organism name" value="c. elegans"/>
</dbReference>
<dbReference type="AGR" id="WB:WBGene00002998"/>
<dbReference type="CTD" id="176256"/>
<dbReference type="WormBase" id="ZK637.7a">
    <molecule id="P30630-2"/>
    <property type="protein sequence ID" value="CE28194"/>
    <property type="gene ID" value="WBGene00002998"/>
    <property type="gene designation" value="lin-9"/>
</dbReference>
<dbReference type="WormBase" id="ZK637.7b">
    <molecule id="P30630-1"/>
    <property type="protein sequence ID" value="CE28195"/>
    <property type="gene ID" value="WBGene00002998"/>
    <property type="gene designation" value="lin-9"/>
</dbReference>
<dbReference type="eggNOG" id="KOG1019">
    <property type="taxonomic scope" value="Eukaryota"/>
</dbReference>
<dbReference type="GeneTree" id="ENSGT00390000003188"/>
<dbReference type="InParanoid" id="P30630"/>
<dbReference type="OMA" id="KEEMIPP"/>
<dbReference type="OrthoDB" id="2339771at2759"/>
<dbReference type="PhylomeDB" id="P30630"/>
<dbReference type="Reactome" id="R-CEL-1538133">
    <property type="pathway name" value="G0 and Early G1"/>
</dbReference>
<dbReference type="PRO" id="PR:P30630"/>
<dbReference type="Proteomes" id="UP000001940">
    <property type="component" value="Chromosome III"/>
</dbReference>
<dbReference type="Bgee" id="WBGene00002998">
    <property type="expression patterns" value="Expressed in germ line (C elegans) and 4 other cell types or tissues"/>
</dbReference>
<dbReference type="GO" id="GO:0070176">
    <property type="term" value="C:DRM complex"/>
    <property type="evidence" value="ECO:0000314"/>
    <property type="project" value="UniProtKB"/>
</dbReference>
<dbReference type="GO" id="GO:0005654">
    <property type="term" value="C:nucleoplasm"/>
    <property type="evidence" value="ECO:0000318"/>
    <property type="project" value="GO_Central"/>
</dbReference>
<dbReference type="GO" id="GO:0003677">
    <property type="term" value="F:DNA binding"/>
    <property type="evidence" value="ECO:0000318"/>
    <property type="project" value="GO_Central"/>
</dbReference>
<dbReference type="GO" id="GO:0006351">
    <property type="term" value="P:DNA-templated transcription"/>
    <property type="evidence" value="ECO:0007669"/>
    <property type="project" value="InterPro"/>
</dbReference>
<dbReference type="GO" id="GO:0009792">
    <property type="term" value="P:embryo development ending in birth or egg hatching"/>
    <property type="evidence" value="ECO:0000315"/>
    <property type="project" value="WormBase"/>
</dbReference>
<dbReference type="GO" id="GO:0008406">
    <property type="term" value="P:gonad development"/>
    <property type="evidence" value="ECO:0000315"/>
    <property type="project" value="WormBase"/>
</dbReference>
<dbReference type="GO" id="GO:0008584">
    <property type="term" value="P:male gonad development"/>
    <property type="evidence" value="ECO:0000315"/>
    <property type="project" value="WormBase"/>
</dbReference>
<dbReference type="GO" id="GO:0040027">
    <property type="term" value="P:negative regulation of vulval development"/>
    <property type="evidence" value="ECO:0000314"/>
    <property type="project" value="ComplexPortal"/>
</dbReference>
<dbReference type="GO" id="GO:0045138">
    <property type="term" value="P:nematode male tail tip morphogenesis"/>
    <property type="evidence" value="ECO:0000315"/>
    <property type="project" value="WormBase"/>
</dbReference>
<dbReference type="GO" id="GO:0051726">
    <property type="term" value="P:regulation of cell cycle"/>
    <property type="evidence" value="ECO:0000318"/>
    <property type="project" value="GO_Central"/>
</dbReference>
<dbReference type="GO" id="GO:0006355">
    <property type="term" value="P:regulation of DNA-templated transcription"/>
    <property type="evidence" value="ECO:0000303"/>
    <property type="project" value="ComplexPortal"/>
</dbReference>
<dbReference type="GO" id="GO:0050767">
    <property type="term" value="P:regulation of neurogenesis"/>
    <property type="evidence" value="ECO:0000315"/>
    <property type="project" value="UniProtKB"/>
</dbReference>
<dbReference type="GO" id="GO:0006357">
    <property type="term" value="P:regulation of transcription by RNA polymerase II"/>
    <property type="evidence" value="ECO:0000318"/>
    <property type="project" value="GO_Central"/>
</dbReference>
<dbReference type="GO" id="GO:0022414">
    <property type="term" value="P:reproductive process"/>
    <property type="evidence" value="ECO:0000315"/>
    <property type="project" value="WormBase"/>
</dbReference>
<dbReference type="InterPro" id="IPR033471">
    <property type="entry name" value="DIRP"/>
</dbReference>
<dbReference type="InterPro" id="IPR010561">
    <property type="entry name" value="LIN-9/ALY1"/>
</dbReference>
<dbReference type="InterPro" id="IPR045831">
    <property type="entry name" value="LIN9_C"/>
</dbReference>
<dbReference type="PANTHER" id="PTHR21689">
    <property type="entry name" value="LIN-9"/>
    <property type="match status" value="1"/>
</dbReference>
<dbReference type="PANTHER" id="PTHR21689:SF2">
    <property type="entry name" value="PROTEIN LIN-9 HOMOLOG"/>
    <property type="match status" value="1"/>
</dbReference>
<dbReference type="Pfam" id="PF06584">
    <property type="entry name" value="DIRP"/>
    <property type="match status" value="1"/>
</dbReference>
<dbReference type="Pfam" id="PF19438">
    <property type="entry name" value="LIN9_C"/>
    <property type="match status" value="1"/>
</dbReference>
<dbReference type="SMART" id="SM01135">
    <property type="entry name" value="DIRP"/>
    <property type="match status" value="1"/>
</dbReference>
<name>LIN9_CAEEL</name>
<feature type="chain" id="PRO_0000084433" description="Protein lin-9">
    <location>
        <begin position="1"/>
        <end position="644"/>
    </location>
</feature>
<feature type="region of interest" description="Disordered" evidence="1">
    <location>
        <begin position="1"/>
        <end position="77"/>
    </location>
</feature>
<feature type="compositionally biased region" description="Basic residues" evidence="1">
    <location>
        <begin position="50"/>
        <end position="62"/>
    </location>
</feature>
<feature type="splice variant" id="VSP_007013" description="In isoform a." evidence="8">
    <location>
        <begin position="104"/>
        <end position="105"/>
    </location>
</feature>
<feature type="mutagenesis site" description="In n112; weak synthetic multivulva phenotype. Temperature-sensitive multivulva phenotype in a lin-8 n111 mutant background." evidence="2 3">
    <original>G</original>
    <variation>E</variation>
    <location>
        <position position="341"/>
    </location>
</feature>
<protein>
    <recommendedName>
        <fullName>Protein lin-9</fullName>
    </recommendedName>
    <alternativeName>
        <fullName>Abnormal cell lineage protein 9</fullName>
    </alternativeName>
</protein>
<proteinExistence type="evidence at protein level"/>
<gene>
    <name evidence="10" type="primary">lin-9</name>
    <name evidence="10" type="ORF">ZK637.7</name>
</gene>
<organism>
    <name type="scientific">Caenorhabditis elegans</name>
    <dbReference type="NCBI Taxonomy" id="6239"/>
    <lineage>
        <taxon>Eukaryota</taxon>
        <taxon>Metazoa</taxon>
        <taxon>Ecdysozoa</taxon>
        <taxon>Nematoda</taxon>
        <taxon>Chromadorea</taxon>
        <taxon>Rhabditida</taxon>
        <taxon>Rhabditina</taxon>
        <taxon>Rhabditomorpha</taxon>
        <taxon>Rhabditoidea</taxon>
        <taxon>Rhabditidae</taxon>
        <taxon>Peloderinae</taxon>
        <taxon>Caenorhabditis</taxon>
    </lineage>
</organism>